<sequence length="147" mass="16234">MTSSAASSPALDDIEEGIALRPKFDAAGLVTCVTTDARSGEVLMVAHMNAEALEKTVQSGEAWYYSRSRKRLWKKGESSGHVQRVLEIRVDCDQDAVWLRVEQAGAACHTGRQSCFYRRIDRDGSGAPLLTMVDADRLFDPAKIYPK</sequence>
<feature type="chain" id="PRO_0000319712" description="Phosphoribosyl-AMP cyclohydrolase">
    <location>
        <begin position="1"/>
        <end position="147"/>
    </location>
</feature>
<feature type="binding site" evidence="1">
    <location>
        <position position="91"/>
    </location>
    <ligand>
        <name>Mg(2+)</name>
        <dbReference type="ChEBI" id="CHEBI:18420"/>
    </ligand>
</feature>
<feature type="binding site" evidence="1">
    <location>
        <position position="92"/>
    </location>
    <ligand>
        <name>Zn(2+)</name>
        <dbReference type="ChEBI" id="CHEBI:29105"/>
        <note>ligand shared between dimeric partners</note>
    </ligand>
</feature>
<feature type="binding site" evidence="1">
    <location>
        <position position="93"/>
    </location>
    <ligand>
        <name>Mg(2+)</name>
        <dbReference type="ChEBI" id="CHEBI:18420"/>
    </ligand>
</feature>
<feature type="binding site" evidence="1">
    <location>
        <position position="95"/>
    </location>
    <ligand>
        <name>Mg(2+)</name>
        <dbReference type="ChEBI" id="CHEBI:18420"/>
    </ligand>
</feature>
<feature type="binding site" evidence="1">
    <location>
        <position position="108"/>
    </location>
    <ligand>
        <name>Zn(2+)</name>
        <dbReference type="ChEBI" id="CHEBI:29105"/>
        <note>ligand shared between dimeric partners</note>
    </ligand>
</feature>
<feature type="binding site" evidence="1">
    <location>
        <position position="115"/>
    </location>
    <ligand>
        <name>Zn(2+)</name>
        <dbReference type="ChEBI" id="CHEBI:29105"/>
        <note>ligand shared between dimeric partners</note>
    </ligand>
</feature>
<proteinExistence type="inferred from homology"/>
<accession>Q134L8</accession>
<comment type="function">
    <text evidence="1">Catalyzes the hydrolysis of the adenine ring of phosphoribosyl-AMP.</text>
</comment>
<comment type="catalytic activity">
    <reaction evidence="1">
        <text>1-(5-phospho-beta-D-ribosyl)-5'-AMP + H2O = 1-(5-phospho-beta-D-ribosyl)-5-[(5-phospho-beta-D-ribosylamino)methylideneamino]imidazole-4-carboxamide</text>
        <dbReference type="Rhea" id="RHEA:20049"/>
        <dbReference type="ChEBI" id="CHEBI:15377"/>
        <dbReference type="ChEBI" id="CHEBI:58435"/>
        <dbReference type="ChEBI" id="CHEBI:59457"/>
        <dbReference type="EC" id="3.5.4.19"/>
    </reaction>
</comment>
<comment type="cofactor">
    <cofactor evidence="1">
        <name>Mg(2+)</name>
        <dbReference type="ChEBI" id="CHEBI:18420"/>
    </cofactor>
    <text evidence="1">Binds 1 Mg(2+) ion per subunit.</text>
</comment>
<comment type="cofactor">
    <cofactor evidence="1">
        <name>Zn(2+)</name>
        <dbReference type="ChEBI" id="CHEBI:29105"/>
    </cofactor>
    <text evidence="1">Binds 1 zinc ion per subunit.</text>
</comment>
<comment type="pathway">
    <text evidence="1">Amino-acid biosynthesis; L-histidine biosynthesis; L-histidine from 5-phospho-alpha-D-ribose 1-diphosphate: step 3/9.</text>
</comment>
<comment type="subunit">
    <text evidence="1">Homodimer.</text>
</comment>
<comment type="subcellular location">
    <subcellularLocation>
        <location evidence="1">Cytoplasm</location>
    </subcellularLocation>
</comment>
<comment type="similarity">
    <text evidence="1">Belongs to the PRA-CH family.</text>
</comment>
<organism>
    <name type="scientific">Rhodopseudomonas palustris (strain BisB5)</name>
    <dbReference type="NCBI Taxonomy" id="316057"/>
    <lineage>
        <taxon>Bacteria</taxon>
        <taxon>Pseudomonadati</taxon>
        <taxon>Pseudomonadota</taxon>
        <taxon>Alphaproteobacteria</taxon>
        <taxon>Hyphomicrobiales</taxon>
        <taxon>Nitrobacteraceae</taxon>
        <taxon>Rhodopseudomonas</taxon>
    </lineage>
</organism>
<reference key="1">
    <citation type="submission" date="2006-03" db="EMBL/GenBank/DDBJ databases">
        <title>Complete sequence of Rhodopseudomonas palustris BisB5.</title>
        <authorList>
            <consortium name="US DOE Joint Genome Institute"/>
            <person name="Copeland A."/>
            <person name="Lucas S."/>
            <person name="Lapidus A."/>
            <person name="Barry K."/>
            <person name="Detter J.C."/>
            <person name="Glavina del Rio T."/>
            <person name="Hammon N."/>
            <person name="Israni S."/>
            <person name="Dalin E."/>
            <person name="Tice H."/>
            <person name="Pitluck S."/>
            <person name="Chain P."/>
            <person name="Malfatti S."/>
            <person name="Shin M."/>
            <person name="Vergez L."/>
            <person name="Schmutz J."/>
            <person name="Larimer F."/>
            <person name="Land M."/>
            <person name="Hauser L."/>
            <person name="Pelletier D.A."/>
            <person name="Kyrpides N."/>
            <person name="Lykidis A."/>
            <person name="Oda Y."/>
            <person name="Harwood C.S."/>
            <person name="Richardson P."/>
        </authorList>
    </citation>
    <scope>NUCLEOTIDE SEQUENCE [LARGE SCALE GENOMIC DNA]</scope>
    <source>
        <strain>BisB5</strain>
    </source>
</reference>
<name>HIS3_RHOPS</name>
<evidence type="ECO:0000255" key="1">
    <source>
        <dbReference type="HAMAP-Rule" id="MF_01021"/>
    </source>
</evidence>
<dbReference type="EC" id="3.5.4.19" evidence="1"/>
<dbReference type="EMBL" id="CP000283">
    <property type="protein sequence ID" value="ABE40471.1"/>
    <property type="molecule type" value="Genomic_DNA"/>
</dbReference>
<dbReference type="SMR" id="Q134L8"/>
<dbReference type="STRING" id="316057.RPD_3247"/>
<dbReference type="KEGG" id="rpd:RPD_3247"/>
<dbReference type="eggNOG" id="COG0139">
    <property type="taxonomic scope" value="Bacteria"/>
</dbReference>
<dbReference type="HOGENOM" id="CLU_048577_5_0_5"/>
<dbReference type="UniPathway" id="UPA00031">
    <property type="reaction ID" value="UER00008"/>
</dbReference>
<dbReference type="Proteomes" id="UP000001818">
    <property type="component" value="Chromosome"/>
</dbReference>
<dbReference type="GO" id="GO:0005737">
    <property type="term" value="C:cytoplasm"/>
    <property type="evidence" value="ECO:0007669"/>
    <property type="project" value="UniProtKB-SubCell"/>
</dbReference>
<dbReference type="GO" id="GO:0000287">
    <property type="term" value="F:magnesium ion binding"/>
    <property type="evidence" value="ECO:0007669"/>
    <property type="project" value="UniProtKB-UniRule"/>
</dbReference>
<dbReference type="GO" id="GO:0004635">
    <property type="term" value="F:phosphoribosyl-AMP cyclohydrolase activity"/>
    <property type="evidence" value="ECO:0007669"/>
    <property type="project" value="UniProtKB-UniRule"/>
</dbReference>
<dbReference type="GO" id="GO:0008270">
    <property type="term" value="F:zinc ion binding"/>
    <property type="evidence" value="ECO:0007669"/>
    <property type="project" value="UniProtKB-UniRule"/>
</dbReference>
<dbReference type="GO" id="GO:0000105">
    <property type="term" value="P:L-histidine biosynthetic process"/>
    <property type="evidence" value="ECO:0007669"/>
    <property type="project" value="UniProtKB-UniRule"/>
</dbReference>
<dbReference type="FunFam" id="3.10.20.810:FF:000001">
    <property type="entry name" value="Histidine biosynthesis bifunctional protein HisIE"/>
    <property type="match status" value="1"/>
</dbReference>
<dbReference type="Gene3D" id="3.10.20.810">
    <property type="entry name" value="Phosphoribosyl-AMP cyclohydrolase"/>
    <property type="match status" value="1"/>
</dbReference>
<dbReference type="HAMAP" id="MF_01021">
    <property type="entry name" value="HisI"/>
    <property type="match status" value="1"/>
</dbReference>
<dbReference type="InterPro" id="IPR026660">
    <property type="entry name" value="PRA-CH"/>
</dbReference>
<dbReference type="InterPro" id="IPR002496">
    <property type="entry name" value="PRib_AMP_CycHydrolase_dom"/>
</dbReference>
<dbReference type="InterPro" id="IPR038019">
    <property type="entry name" value="PRib_AMP_CycHydrolase_sf"/>
</dbReference>
<dbReference type="NCBIfam" id="NF000768">
    <property type="entry name" value="PRK00051.1"/>
    <property type="match status" value="1"/>
</dbReference>
<dbReference type="PANTHER" id="PTHR42945">
    <property type="entry name" value="HISTIDINE BIOSYNTHESIS BIFUNCTIONAL PROTEIN"/>
    <property type="match status" value="1"/>
</dbReference>
<dbReference type="PANTHER" id="PTHR42945:SF1">
    <property type="entry name" value="HISTIDINE BIOSYNTHESIS BIFUNCTIONAL PROTEIN HIS7"/>
    <property type="match status" value="1"/>
</dbReference>
<dbReference type="Pfam" id="PF01502">
    <property type="entry name" value="PRA-CH"/>
    <property type="match status" value="1"/>
</dbReference>
<dbReference type="SUPFAM" id="SSF141734">
    <property type="entry name" value="HisI-like"/>
    <property type="match status" value="1"/>
</dbReference>
<keyword id="KW-0028">Amino-acid biosynthesis</keyword>
<keyword id="KW-0963">Cytoplasm</keyword>
<keyword id="KW-0368">Histidine biosynthesis</keyword>
<keyword id="KW-0378">Hydrolase</keyword>
<keyword id="KW-0460">Magnesium</keyword>
<keyword id="KW-0479">Metal-binding</keyword>
<keyword id="KW-0862">Zinc</keyword>
<protein>
    <recommendedName>
        <fullName evidence="1">Phosphoribosyl-AMP cyclohydrolase</fullName>
        <shortName evidence="1">PRA-CH</shortName>
        <ecNumber evidence="1">3.5.4.19</ecNumber>
    </recommendedName>
</protein>
<gene>
    <name evidence="1" type="primary">hisI</name>
    <name type="ordered locus">RPD_3247</name>
</gene>